<keyword id="KW-0067">ATP-binding</keyword>
<keyword id="KW-0963">Cytoplasm</keyword>
<keyword id="KW-0324">Glycolysis</keyword>
<keyword id="KW-0418">Kinase</keyword>
<keyword id="KW-0547">Nucleotide-binding</keyword>
<keyword id="KW-0808">Transferase</keyword>
<gene>
    <name evidence="1" type="primary">glk</name>
    <name type="ordered locus">XfasM23_0337</name>
</gene>
<reference key="1">
    <citation type="journal article" date="2010" name="J. Bacteriol.">
        <title>Whole genome sequences of two Xylella fastidiosa strains (M12 and M23) causing almond leaf scorch disease in California.</title>
        <authorList>
            <person name="Chen J."/>
            <person name="Xie G."/>
            <person name="Han S."/>
            <person name="Chertkov O."/>
            <person name="Sims D."/>
            <person name="Civerolo E.L."/>
        </authorList>
    </citation>
    <scope>NUCLEOTIDE SEQUENCE [LARGE SCALE GENOMIC DNA]</scope>
    <source>
        <strain>M23</strain>
    </source>
</reference>
<dbReference type="EC" id="2.7.1.2" evidence="1"/>
<dbReference type="EMBL" id="CP001011">
    <property type="protein sequence ID" value="ACB91785.1"/>
    <property type="molecule type" value="Genomic_DNA"/>
</dbReference>
<dbReference type="RefSeq" id="WP_004089300.1">
    <property type="nucleotide sequence ID" value="NC_010577.1"/>
</dbReference>
<dbReference type="SMR" id="B2I7Q9"/>
<dbReference type="KEGG" id="xfn:XfasM23_0337"/>
<dbReference type="HOGENOM" id="CLU_042582_1_0_6"/>
<dbReference type="Proteomes" id="UP000001698">
    <property type="component" value="Chromosome"/>
</dbReference>
<dbReference type="GO" id="GO:0005829">
    <property type="term" value="C:cytosol"/>
    <property type="evidence" value="ECO:0007669"/>
    <property type="project" value="TreeGrafter"/>
</dbReference>
<dbReference type="GO" id="GO:0005524">
    <property type="term" value="F:ATP binding"/>
    <property type="evidence" value="ECO:0007669"/>
    <property type="project" value="UniProtKB-UniRule"/>
</dbReference>
<dbReference type="GO" id="GO:0005536">
    <property type="term" value="F:D-glucose binding"/>
    <property type="evidence" value="ECO:0007669"/>
    <property type="project" value="InterPro"/>
</dbReference>
<dbReference type="GO" id="GO:0004340">
    <property type="term" value="F:glucokinase activity"/>
    <property type="evidence" value="ECO:0007669"/>
    <property type="project" value="UniProtKB-UniRule"/>
</dbReference>
<dbReference type="GO" id="GO:0006096">
    <property type="term" value="P:glycolytic process"/>
    <property type="evidence" value="ECO:0007669"/>
    <property type="project" value="UniProtKB-UniRule"/>
</dbReference>
<dbReference type="CDD" id="cd24008">
    <property type="entry name" value="ASKHA_NBD_GLK"/>
    <property type="match status" value="1"/>
</dbReference>
<dbReference type="Gene3D" id="3.30.420.40">
    <property type="match status" value="1"/>
</dbReference>
<dbReference type="Gene3D" id="3.40.367.20">
    <property type="match status" value="1"/>
</dbReference>
<dbReference type="HAMAP" id="MF_00524">
    <property type="entry name" value="Glucokinase"/>
    <property type="match status" value="1"/>
</dbReference>
<dbReference type="InterPro" id="IPR043129">
    <property type="entry name" value="ATPase_NBD"/>
</dbReference>
<dbReference type="InterPro" id="IPR050201">
    <property type="entry name" value="Bacterial_glucokinase"/>
</dbReference>
<dbReference type="InterPro" id="IPR003836">
    <property type="entry name" value="Glucokinase"/>
</dbReference>
<dbReference type="NCBIfam" id="TIGR00749">
    <property type="entry name" value="glk"/>
    <property type="match status" value="1"/>
</dbReference>
<dbReference type="PANTHER" id="PTHR47690">
    <property type="entry name" value="GLUCOKINASE"/>
    <property type="match status" value="1"/>
</dbReference>
<dbReference type="PANTHER" id="PTHR47690:SF1">
    <property type="entry name" value="GLUCOKINASE"/>
    <property type="match status" value="1"/>
</dbReference>
<dbReference type="Pfam" id="PF02685">
    <property type="entry name" value="Glucokinase"/>
    <property type="match status" value="1"/>
</dbReference>
<dbReference type="SUPFAM" id="SSF53067">
    <property type="entry name" value="Actin-like ATPase domain"/>
    <property type="match status" value="1"/>
</dbReference>
<proteinExistence type="inferred from homology"/>
<name>GLK_XYLF2</name>
<organism>
    <name type="scientific">Xylella fastidiosa (strain M23)</name>
    <dbReference type="NCBI Taxonomy" id="405441"/>
    <lineage>
        <taxon>Bacteria</taxon>
        <taxon>Pseudomonadati</taxon>
        <taxon>Pseudomonadota</taxon>
        <taxon>Gammaproteobacteria</taxon>
        <taxon>Lysobacterales</taxon>
        <taxon>Lysobacteraceae</taxon>
        <taxon>Xylella</taxon>
    </lineage>
</organism>
<accession>B2I7Q9</accession>
<evidence type="ECO:0000255" key="1">
    <source>
        <dbReference type="HAMAP-Rule" id="MF_00524"/>
    </source>
</evidence>
<protein>
    <recommendedName>
        <fullName evidence="1">Glucokinase</fullName>
        <ecNumber evidence="1">2.7.1.2</ecNumber>
    </recommendedName>
    <alternativeName>
        <fullName evidence="1">Glucose kinase</fullName>
    </alternativeName>
</protein>
<feature type="chain" id="PRO_1000127729" description="Glucokinase">
    <location>
        <begin position="1"/>
        <end position="337"/>
    </location>
</feature>
<feature type="binding site" evidence="1">
    <location>
        <begin position="11"/>
        <end position="16"/>
    </location>
    <ligand>
        <name>ATP</name>
        <dbReference type="ChEBI" id="CHEBI:30616"/>
    </ligand>
</feature>
<sequence length="337" mass="36273">MNAPQAPVLVADIGGTNARFALANPTLTSAPLLNDSMREFAVIEFPSLGEAAQHYLHHIGIHTTKGVFAIAGHVDGDEARITNHPWVITRTRTATMLGFDTLHLINDFVAQAMAISVLGPQDVIQIGSAKWEQFPLSAATRNYGIIGPGTGLGVGGLMIRNGRCYPLETEGGHVSFPPSTPEEIRILEILSQQFGRVSNERLISGPGIVNIHRALSEIDGIDPGPLRPQDITMRAADGDIRATRTINLFCNIFGTITGDLVLIQGAWDGVFLTGGLVPKLLNSIQHSGFRQRFEHKGRFSAIMARIPSLAVIHPHPGLLGAAAYARDTEQVPQEIKA</sequence>
<comment type="catalytic activity">
    <reaction evidence="1">
        <text>D-glucose + ATP = D-glucose 6-phosphate + ADP + H(+)</text>
        <dbReference type="Rhea" id="RHEA:17825"/>
        <dbReference type="ChEBI" id="CHEBI:4167"/>
        <dbReference type="ChEBI" id="CHEBI:15378"/>
        <dbReference type="ChEBI" id="CHEBI:30616"/>
        <dbReference type="ChEBI" id="CHEBI:61548"/>
        <dbReference type="ChEBI" id="CHEBI:456216"/>
        <dbReference type="EC" id="2.7.1.2"/>
    </reaction>
</comment>
<comment type="subcellular location">
    <subcellularLocation>
        <location evidence="1">Cytoplasm</location>
    </subcellularLocation>
</comment>
<comment type="similarity">
    <text evidence="1">Belongs to the bacterial glucokinase family.</text>
</comment>